<gene>
    <name evidence="1" type="primary">gltX1</name>
    <name type="ordered locus">SYNAS_01920</name>
    <name type="ORF">SYN_02557</name>
</gene>
<feature type="chain" id="PRO_0000237413" description="Glutamate--tRNA ligase 1">
    <location>
        <begin position="1"/>
        <end position="472"/>
    </location>
</feature>
<feature type="short sequence motif" description="'HIGH' region" evidence="1">
    <location>
        <begin position="13"/>
        <end position="23"/>
    </location>
</feature>
<feature type="short sequence motif" description="'KMSKS' region" evidence="1">
    <location>
        <begin position="239"/>
        <end position="243"/>
    </location>
</feature>
<feature type="binding site" evidence="1">
    <location>
        <position position="102"/>
    </location>
    <ligand>
        <name>Zn(2+)</name>
        <dbReference type="ChEBI" id="CHEBI:29105"/>
    </ligand>
</feature>
<feature type="binding site" evidence="1">
    <location>
        <position position="104"/>
    </location>
    <ligand>
        <name>Zn(2+)</name>
        <dbReference type="ChEBI" id="CHEBI:29105"/>
    </ligand>
</feature>
<feature type="binding site" evidence="1">
    <location>
        <position position="129"/>
    </location>
    <ligand>
        <name>Zn(2+)</name>
        <dbReference type="ChEBI" id="CHEBI:29105"/>
    </ligand>
</feature>
<feature type="binding site" evidence="1">
    <location>
        <position position="131"/>
    </location>
    <ligand>
        <name>Zn(2+)</name>
        <dbReference type="ChEBI" id="CHEBI:29105"/>
    </ligand>
</feature>
<feature type="binding site" evidence="1">
    <location>
        <position position="242"/>
    </location>
    <ligand>
        <name>ATP</name>
        <dbReference type="ChEBI" id="CHEBI:30616"/>
    </ligand>
</feature>
<accession>Q2LQN4</accession>
<organism>
    <name type="scientific">Syntrophus aciditrophicus (strain SB)</name>
    <dbReference type="NCBI Taxonomy" id="56780"/>
    <lineage>
        <taxon>Bacteria</taxon>
        <taxon>Pseudomonadati</taxon>
        <taxon>Thermodesulfobacteriota</taxon>
        <taxon>Syntrophia</taxon>
        <taxon>Syntrophales</taxon>
        <taxon>Syntrophaceae</taxon>
        <taxon>Syntrophus</taxon>
    </lineage>
</organism>
<proteinExistence type="inferred from homology"/>
<dbReference type="EC" id="6.1.1.17" evidence="1"/>
<dbReference type="EMBL" id="CP000252">
    <property type="protein sequence ID" value="ABC76071.1"/>
    <property type="molecule type" value="Genomic_DNA"/>
</dbReference>
<dbReference type="RefSeq" id="WP_011416106.1">
    <property type="nucleotide sequence ID" value="NC_007759.1"/>
</dbReference>
<dbReference type="SMR" id="Q2LQN4"/>
<dbReference type="FunCoup" id="Q2LQN4">
    <property type="interactions" value="521"/>
</dbReference>
<dbReference type="STRING" id="56780.SYN_02557"/>
<dbReference type="KEGG" id="sat:SYN_02557"/>
<dbReference type="eggNOG" id="COG0008">
    <property type="taxonomic scope" value="Bacteria"/>
</dbReference>
<dbReference type="HOGENOM" id="CLU_015768_6_3_7"/>
<dbReference type="InParanoid" id="Q2LQN4"/>
<dbReference type="OrthoDB" id="9807503at2"/>
<dbReference type="Proteomes" id="UP000001933">
    <property type="component" value="Chromosome"/>
</dbReference>
<dbReference type="GO" id="GO:0005829">
    <property type="term" value="C:cytosol"/>
    <property type="evidence" value="ECO:0007669"/>
    <property type="project" value="TreeGrafter"/>
</dbReference>
<dbReference type="GO" id="GO:0005524">
    <property type="term" value="F:ATP binding"/>
    <property type="evidence" value="ECO:0007669"/>
    <property type="project" value="UniProtKB-UniRule"/>
</dbReference>
<dbReference type="GO" id="GO:0004818">
    <property type="term" value="F:glutamate-tRNA ligase activity"/>
    <property type="evidence" value="ECO:0007669"/>
    <property type="project" value="UniProtKB-UniRule"/>
</dbReference>
<dbReference type="GO" id="GO:0000049">
    <property type="term" value="F:tRNA binding"/>
    <property type="evidence" value="ECO:0007669"/>
    <property type="project" value="InterPro"/>
</dbReference>
<dbReference type="GO" id="GO:0008270">
    <property type="term" value="F:zinc ion binding"/>
    <property type="evidence" value="ECO:0007669"/>
    <property type="project" value="UniProtKB-UniRule"/>
</dbReference>
<dbReference type="GO" id="GO:0006424">
    <property type="term" value="P:glutamyl-tRNA aminoacylation"/>
    <property type="evidence" value="ECO:0007669"/>
    <property type="project" value="UniProtKB-UniRule"/>
</dbReference>
<dbReference type="CDD" id="cd00808">
    <property type="entry name" value="GluRS_core"/>
    <property type="match status" value="1"/>
</dbReference>
<dbReference type="FunFam" id="3.40.50.620:FF:000007">
    <property type="entry name" value="Glutamate--tRNA ligase"/>
    <property type="match status" value="1"/>
</dbReference>
<dbReference type="Gene3D" id="1.10.10.350">
    <property type="match status" value="1"/>
</dbReference>
<dbReference type="Gene3D" id="3.40.50.620">
    <property type="entry name" value="HUPs"/>
    <property type="match status" value="1"/>
</dbReference>
<dbReference type="HAMAP" id="MF_00022">
    <property type="entry name" value="Glu_tRNA_synth_type1"/>
    <property type="match status" value="1"/>
</dbReference>
<dbReference type="InterPro" id="IPR045462">
    <property type="entry name" value="aa-tRNA-synth_I_cd-bd"/>
</dbReference>
<dbReference type="InterPro" id="IPR020751">
    <property type="entry name" value="aa-tRNA-synth_I_codon-bd_sub2"/>
</dbReference>
<dbReference type="InterPro" id="IPR001412">
    <property type="entry name" value="aa-tRNA-synth_I_CS"/>
</dbReference>
<dbReference type="InterPro" id="IPR008925">
    <property type="entry name" value="aa_tRNA-synth_I_cd-bd_sf"/>
</dbReference>
<dbReference type="InterPro" id="IPR004527">
    <property type="entry name" value="Glu-tRNA-ligase_bac/mito"/>
</dbReference>
<dbReference type="InterPro" id="IPR000924">
    <property type="entry name" value="Glu/Gln-tRNA-synth"/>
</dbReference>
<dbReference type="InterPro" id="IPR020058">
    <property type="entry name" value="Glu/Gln-tRNA-synth_Ib_cat-dom"/>
</dbReference>
<dbReference type="InterPro" id="IPR049940">
    <property type="entry name" value="GluQ/Sye"/>
</dbReference>
<dbReference type="InterPro" id="IPR033910">
    <property type="entry name" value="GluRS_core"/>
</dbReference>
<dbReference type="InterPro" id="IPR014729">
    <property type="entry name" value="Rossmann-like_a/b/a_fold"/>
</dbReference>
<dbReference type="NCBIfam" id="TIGR00464">
    <property type="entry name" value="gltX_bact"/>
    <property type="match status" value="1"/>
</dbReference>
<dbReference type="PANTHER" id="PTHR43311">
    <property type="entry name" value="GLUTAMATE--TRNA LIGASE"/>
    <property type="match status" value="1"/>
</dbReference>
<dbReference type="PANTHER" id="PTHR43311:SF2">
    <property type="entry name" value="GLUTAMATE--TRNA LIGASE, MITOCHONDRIAL-RELATED"/>
    <property type="match status" value="1"/>
</dbReference>
<dbReference type="Pfam" id="PF19269">
    <property type="entry name" value="Anticodon_2"/>
    <property type="match status" value="1"/>
</dbReference>
<dbReference type="Pfam" id="PF00749">
    <property type="entry name" value="tRNA-synt_1c"/>
    <property type="match status" value="1"/>
</dbReference>
<dbReference type="PRINTS" id="PR00987">
    <property type="entry name" value="TRNASYNTHGLU"/>
</dbReference>
<dbReference type="SUPFAM" id="SSF48163">
    <property type="entry name" value="An anticodon-binding domain of class I aminoacyl-tRNA synthetases"/>
    <property type="match status" value="1"/>
</dbReference>
<dbReference type="SUPFAM" id="SSF52374">
    <property type="entry name" value="Nucleotidylyl transferase"/>
    <property type="match status" value="1"/>
</dbReference>
<dbReference type="PROSITE" id="PS00178">
    <property type="entry name" value="AA_TRNA_LIGASE_I"/>
    <property type="match status" value="1"/>
</dbReference>
<protein>
    <recommendedName>
        <fullName evidence="1">Glutamate--tRNA ligase 1</fullName>
        <ecNumber evidence="1">6.1.1.17</ecNumber>
    </recommendedName>
    <alternativeName>
        <fullName evidence="1">Glutamyl-tRNA synthetase 1</fullName>
        <shortName evidence="1">GluRS 1</shortName>
    </alternativeName>
</protein>
<evidence type="ECO:0000255" key="1">
    <source>
        <dbReference type="HAMAP-Rule" id="MF_00022"/>
    </source>
</evidence>
<reference key="1">
    <citation type="journal article" date="2007" name="Proc. Natl. Acad. Sci. U.S.A.">
        <title>The genome of Syntrophus aciditrophicus: life at the thermodynamic limit of microbial growth.</title>
        <authorList>
            <person name="McInerney M.J."/>
            <person name="Rohlin L."/>
            <person name="Mouttaki H."/>
            <person name="Kim U."/>
            <person name="Krupp R.S."/>
            <person name="Rios-Hernandez L."/>
            <person name="Sieber J."/>
            <person name="Struchtemeyer C.G."/>
            <person name="Bhattacharyya A."/>
            <person name="Campbell J.W."/>
            <person name="Gunsalus R.P."/>
        </authorList>
    </citation>
    <scope>NUCLEOTIDE SEQUENCE [LARGE SCALE GENOMIC DNA]</scope>
    <source>
        <strain>SB</strain>
    </source>
</reference>
<name>SYE1_SYNAS</name>
<sequence>MQKLKEIRTRFAPSPTGYLHIGGARTALFSWLYARHHQGKFVLRIEDTDQLRSTEESTRAILDAMTWLGLNWDEGPVFQAERVDIHRAMIRKLVDEDKAYYCTCTPDELEEKRKRALAEGRKPKYDGTCREKKLPPSPGTVVRFRCPQTGITVVDDLIKGKISFNNEELDDLIIQRSDGYPTYNFAVVVDDAQMGISHVIRGDDHVNNTPRQILLYQALGYDIPHFGHVPMILGADKARLSKRHGATSVMAYKDMGYLPEALVNYLVRLGWSHGDQEIFSLDELIALFGLESIGKSAAVFNPEKLLWLNQHYIKTYPEDRLLEVLQPFWKQLGIEAPDPDYGRSIVRDLRARAKTLVDMAESSTFYFNDEPAIDADAAKKFLTPEIAGHLEAIAEALATLGDYSKEGIEIFLRSLVEARAIKLKTIAQPLRIALTGKTVSPGLDDIMLTLGKERVIARIQRTVAYIRSGMAS</sequence>
<comment type="function">
    <text evidence="1">Catalyzes the attachment of glutamate to tRNA(Glu) in a two-step reaction: glutamate is first activated by ATP to form Glu-AMP and then transferred to the acceptor end of tRNA(Glu).</text>
</comment>
<comment type="catalytic activity">
    <reaction evidence="1">
        <text>tRNA(Glu) + L-glutamate + ATP = L-glutamyl-tRNA(Glu) + AMP + diphosphate</text>
        <dbReference type="Rhea" id="RHEA:23540"/>
        <dbReference type="Rhea" id="RHEA-COMP:9663"/>
        <dbReference type="Rhea" id="RHEA-COMP:9680"/>
        <dbReference type="ChEBI" id="CHEBI:29985"/>
        <dbReference type="ChEBI" id="CHEBI:30616"/>
        <dbReference type="ChEBI" id="CHEBI:33019"/>
        <dbReference type="ChEBI" id="CHEBI:78442"/>
        <dbReference type="ChEBI" id="CHEBI:78520"/>
        <dbReference type="ChEBI" id="CHEBI:456215"/>
        <dbReference type="EC" id="6.1.1.17"/>
    </reaction>
</comment>
<comment type="cofactor">
    <cofactor evidence="1">
        <name>Zn(2+)</name>
        <dbReference type="ChEBI" id="CHEBI:29105"/>
    </cofactor>
    <text evidence="1">Binds 1 zinc ion per subunit.</text>
</comment>
<comment type="subunit">
    <text evidence="1">Monomer.</text>
</comment>
<comment type="subcellular location">
    <subcellularLocation>
        <location evidence="1">Cytoplasm</location>
    </subcellularLocation>
</comment>
<comment type="similarity">
    <text evidence="1">Belongs to the class-I aminoacyl-tRNA synthetase family. Glutamate--tRNA ligase type 1 subfamily.</text>
</comment>
<keyword id="KW-0030">Aminoacyl-tRNA synthetase</keyword>
<keyword id="KW-0067">ATP-binding</keyword>
<keyword id="KW-0963">Cytoplasm</keyword>
<keyword id="KW-0436">Ligase</keyword>
<keyword id="KW-0479">Metal-binding</keyword>
<keyword id="KW-0547">Nucleotide-binding</keyword>
<keyword id="KW-0648">Protein biosynthesis</keyword>
<keyword id="KW-1185">Reference proteome</keyword>
<keyword id="KW-0862">Zinc</keyword>